<accession>Q949J1</accession>
<comment type="catalytic activity">
    <reaction evidence="4">
        <text>diphosphate + H2O = 2 phosphate + H(+)</text>
        <dbReference type="Rhea" id="RHEA:24576"/>
        <dbReference type="ChEBI" id="CHEBI:15377"/>
        <dbReference type="ChEBI" id="CHEBI:15378"/>
        <dbReference type="ChEBI" id="CHEBI:33019"/>
        <dbReference type="ChEBI" id="CHEBI:43474"/>
        <dbReference type="EC" id="3.6.1.1"/>
    </reaction>
</comment>
<comment type="cofactor">
    <cofactor evidence="1">
        <name>Mg(2+)</name>
        <dbReference type="ChEBI" id="CHEBI:18420"/>
    </cofactor>
</comment>
<comment type="biophysicochemical properties">
    <kinetics>
        <KM evidence="4">65.2 uM for Mg2-PPi</KM>
    </kinetics>
    <phDependence>
        <text evidence="4">Optimum pH is 7.5.</text>
    </phDependence>
</comment>
<comment type="subunit">
    <text evidence="4">Monomer.</text>
</comment>
<comment type="subcellular location">
    <subcellularLocation>
        <location evidence="4">Mitochondrion</location>
    </subcellularLocation>
</comment>
<comment type="PTM">
    <text evidence="4">The N-terminus is blocked.</text>
</comment>
<comment type="mass spectrometry"/>
<comment type="similarity">
    <text evidence="3">Belongs to the PPase family.</text>
</comment>
<protein>
    <recommendedName>
        <fullName>Soluble inorganic pyrophosphatase 2</fullName>
        <ecNumber>3.6.1.1</ecNumber>
    </recommendedName>
    <alternativeName>
        <fullName>Pyrophosphate phospho-hydrolase 2</fullName>
        <shortName>PPase 2</shortName>
    </alternativeName>
</protein>
<sequence>MSFYRGTASHPWHDLHPGNDAPNFVSCVIEIPRGSKVKYELDKDTGLCFVDRILYSSVVYPHNYGFVPKTLCEDGDPLDVLVLMQEPVVPMCFLRAKPIGVMQMLDQGERDDKLIAVHADDPEYKGFTDISQLPPHRLAEIKRFFEDYKKNEHKEVVVDDFLGAEEAKKVVKDSLNMYQEHYVPRKLRNVYE</sequence>
<name>IPYR2_CHLRE</name>
<evidence type="ECO:0000250" key="1">
    <source>
        <dbReference type="UniProtKB" id="P0A7A9"/>
    </source>
</evidence>
<evidence type="ECO:0000250" key="2">
    <source>
        <dbReference type="UniProtKB" id="P9WI55"/>
    </source>
</evidence>
<evidence type="ECO:0000255" key="3"/>
<evidence type="ECO:0000269" key="4">
    <source>
    </source>
</evidence>
<evidence type="ECO:0000305" key="5"/>
<evidence type="ECO:0000312" key="6">
    <source>
        <dbReference type="EMBL" id="CAC42763.1"/>
    </source>
</evidence>
<gene>
    <name type="primary">ppa2</name>
    <name type="synonym">ppaII</name>
</gene>
<feature type="chain" id="PRO_0000253939" description="Soluble inorganic pyrophosphatase 2">
    <location>
        <begin position="1"/>
        <end position="192"/>
    </location>
</feature>
<feature type="binding site" evidence="2">
    <location>
        <position position="38"/>
    </location>
    <ligand>
        <name>substrate</name>
    </ligand>
</feature>
<feature type="binding site" evidence="2">
    <location>
        <position position="52"/>
    </location>
    <ligand>
        <name>substrate</name>
    </ligand>
</feature>
<feature type="binding site" evidence="2">
    <location>
        <position position="64"/>
    </location>
    <ligand>
        <name>substrate</name>
    </ligand>
</feature>
<feature type="binding site" evidence="1">
    <location>
        <position position="74"/>
    </location>
    <ligand>
        <name>Mg(2+)</name>
        <dbReference type="ChEBI" id="CHEBI:18420"/>
        <label>1</label>
    </ligand>
</feature>
<feature type="binding site" evidence="1">
    <location>
        <position position="79"/>
    </location>
    <ligand>
        <name>Mg(2+)</name>
        <dbReference type="ChEBI" id="CHEBI:18420"/>
        <label>1</label>
    </ligand>
</feature>
<feature type="binding site" evidence="1">
    <location>
        <position position="79"/>
    </location>
    <ligand>
        <name>Mg(2+)</name>
        <dbReference type="ChEBI" id="CHEBI:18420"/>
        <label>2</label>
    </ligand>
</feature>
<feature type="binding site" evidence="1">
    <location>
        <position position="111"/>
    </location>
    <ligand>
        <name>Mg(2+)</name>
        <dbReference type="ChEBI" id="CHEBI:18420"/>
        <label>1</label>
    </ligand>
</feature>
<feature type="binding site" evidence="2">
    <location>
        <position position="148"/>
    </location>
    <ligand>
        <name>substrate</name>
    </ligand>
</feature>
<reference evidence="5 6" key="1">
    <citation type="journal article" date="2006" name="Biochem. J.">
        <title>A novel subfamily of monomeric inorganic pyrophosphatases in photosynthetic eukaryotes.</title>
        <authorList>
            <person name="Gomez-Garcia M.R."/>
            <person name="Losada M."/>
            <person name="Serrano A."/>
        </authorList>
    </citation>
    <scope>NUCLEOTIDE SEQUENCE [MRNA]</scope>
    <scope>CATALYTIC ACTIVITY</scope>
    <scope>BIOPHYSICOCHEMICAL PROPERTIES</scope>
    <scope>SUBUNIT</scope>
    <scope>SUBCELLULAR LOCATION</scope>
    <scope>MASS SPECTROMETRY</scope>
    <source>
        <strain>21gr / CC-1690</strain>
    </source>
</reference>
<proteinExistence type="evidence at protein level"/>
<dbReference type="EC" id="3.6.1.1"/>
<dbReference type="EMBL" id="AJ298232">
    <property type="protein sequence ID" value="CAC42763.1"/>
    <property type="molecule type" value="mRNA"/>
</dbReference>
<dbReference type="RefSeq" id="XP_001694912.1">
    <property type="nucleotide sequence ID" value="XM_001694860.1"/>
</dbReference>
<dbReference type="SMR" id="Q949J1"/>
<dbReference type="PaxDb" id="3055-EDP02064"/>
<dbReference type="ProMEX" id="Q949J1"/>
<dbReference type="EnsemblPlants" id="PNW78720">
    <property type="protein sequence ID" value="PNW78720"/>
    <property type="gene ID" value="CHLRE_09g387875v5"/>
</dbReference>
<dbReference type="Gramene" id="PNW78720">
    <property type="protein sequence ID" value="PNW78720"/>
    <property type="gene ID" value="CHLRE_09g387875v5"/>
</dbReference>
<dbReference type="KEGG" id="cre:CHLRE_09g387875v5"/>
<dbReference type="eggNOG" id="KOG1626">
    <property type="taxonomic scope" value="Eukaryota"/>
</dbReference>
<dbReference type="HOGENOM" id="CLU_073198_2_1_1"/>
<dbReference type="OMA" id="TASHPWH"/>
<dbReference type="OrthoDB" id="1608002at2759"/>
<dbReference type="BRENDA" id="3.6.1.1">
    <property type="organism ID" value="1318"/>
</dbReference>
<dbReference type="SABIO-RK" id="Q949J1"/>
<dbReference type="GO" id="GO:0005739">
    <property type="term" value="C:mitochondrion"/>
    <property type="evidence" value="ECO:0000314"/>
    <property type="project" value="UniProtKB"/>
</dbReference>
<dbReference type="GO" id="GO:0004427">
    <property type="term" value="F:inorganic diphosphate phosphatase activity"/>
    <property type="evidence" value="ECO:0000314"/>
    <property type="project" value="UniProtKB"/>
</dbReference>
<dbReference type="GO" id="GO:0000287">
    <property type="term" value="F:magnesium ion binding"/>
    <property type="evidence" value="ECO:0007669"/>
    <property type="project" value="InterPro"/>
</dbReference>
<dbReference type="GO" id="GO:0006796">
    <property type="term" value="P:phosphate-containing compound metabolic process"/>
    <property type="evidence" value="ECO:0007669"/>
    <property type="project" value="InterPro"/>
</dbReference>
<dbReference type="CDD" id="cd00412">
    <property type="entry name" value="pyrophosphatase"/>
    <property type="match status" value="1"/>
</dbReference>
<dbReference type="FunFam" id="3.90.80.10:FF:000002">
    <property type="entry name" value="Soluble inorganic pyrophosphatase 4"/>
    <property type="match status" value="1"/>
</dbReference>
<dbReference type="Gene3D" id="3.90.80.10">
    <property type="entry name" value="Inorganic pyrophosphatase"/>
    <property type="match status" value="1"/>
</dbReference>
<dbReference type="HAMAP" id="MF_00209">
    <property type="entry name" value="Inorganic_PPase"/>
    <property type="match status" value="1"/>
</dbReference>
<dbReference type="InterPro" id="IPR008162">
    <property type="entry name" value="Pyrophosphatase"/>
</dbReference>
<dbReference type="InterPro" id="IPR036649">
    <property type="entry name" value="Pyrophosphatase_sf"/>
</dbReference>
<dbReference type="PANTHER" id="PTHR10286">
    <property type="entry name" value="INORGANIC PYROPHOSPHATASE"/>
    <property type="match status" value="1"/>
</dbReference>
<dbReference type="Pfam" id="PF00719">
    <property type="entry name" value="Pyrophosphatase"/>
    <property type="match status" value="1"/>
</dbReference>
<dbReference type="SUPFAM" id="SSF50324">
    <property type="entry name" value="Inorganic pyrophosphatase"/>
    <property type="match status" value="1"/>
</dbReference>
<dbReference type="PROSITE" id="PS00387">
    <property type="entry name" value="PPASE"/>
    <property type="match status" value="1"/>
</dbReference>
<organism>
    <name type="scientific">Chlamydomonas reinhardtii</name>
    <name type="common">Chlamydomonas smithii</name>
    <dbReference type="NCBI Taxonomy" id="3055"/>
    <lineage>
        <taxon>Eukaryota</taxon>
        <taxon>Viridiplantae</taxon>
        <taxon>Chlorophyta</taxon>
        <taxon>core chlorophytes</taxon>
        <taxon>Chlorophyceae</taxon>
        <taxon>CS clade</taxon>
        <taxon>Chlamydomonadales</taxon>
        <taxon>Chlamydomonadaceae</taxon>
        <taxon>Chlamydomonas</taxon>
    </lineage>
</organism>
<keyword id="KW-0378">Hydrolase</keyword>
<keyword id="KW-0460">Magnesium</keyword>
<keyword id="KW-0479">Metal-binding</keyword>
<keyword id="KW-0496">Mitochondrion</keyword>